<comment type="function">
    <text evidence="2">Plays an essential role in viral RNA transcription and replication by forming the heterotrimeric polymerase complex together with PB1 and PB2 subunits. The complex transcribes viral mRNAs by using a unique mechanism called cap-snatching. It consists in the hijacking and cleavage of host capped pre-mRNAs. These short capped RNAs are then used as primers for viral mRNAs. The PB2 subunit is responsible for the binding of the 5' cap of cellular pre-mRNAs which are subsequently cleaved after 10-13 nucleotides by the PA subunit that carries the endonuclease activity.</text>
</comment>
<comment type="cofactor">
    <cofactor evidence="2">
        <name>Mn(2+)</name>
        <dbReference type="ChEBI" id="CHEBI:29035"/>
    </cofactor>
    <text evidence="2">Binds 2 manganese ions per subunit.</text>
</comment>
<comment type="subunit">
    <text evidence="1 2">Influenza RNA polymerase is composed of three subunits: PB1, PB2 and PA. Interacts (via C-terminus) with PB1 (via N-terminus).</text>
</comment>
<comment type="subcellular location">
    <subcellularLocation>
        <location evidence="2">Host cytoplasm</location>
    </subcellularLocation>
    <subcellularLocation>
        <location evidence="2">Host nucleus</location>
    </subcellularLocation>
    <text evidence="1 2">PB1 and PA are transported in the host nucleus as a complex.</text>
</comment>
<comment type="alternative products">
    <event type="ribosomal frameshifting"/>
    <isoform>
        <id>P12444-1</id>
        <name>PA</name>
        <sequence type="displayed"/>
    </isoform>
    <isoform>
        <id>P0CK89-1</id>
        <name>PA-X</name>
        <sequence type="external"/>
    </isoform>
</comment>
<comment type="PTM">
    <text evidence="1 2">Phosphorylated on serines and threonines by host kinases, including human casein kinase II.</text>
</comment>
<comment type="similarity">
    <text evidence="2">Belongs to the influenza viruses PA family.</text>
</comment>
<reference key="1">
    <citation type="journal article" date="1987" name="Virology">
        <title>Structural changes in the haemagglutinin which accompany egg adaptation of an influenza A(H1N1) virus.</title>
        <authorList>
            <person name="Robertson J.S."/>
            <person name="Newman R."/>
            <person name="Oxford J.S."/>
            <person name="Daniels R.S."/>
            <person name="Webster R.G."/>
            <person name="Schild G.C."/>
        </authorList>
    </citation>
    <scope>NUCLEOTIDE SEQUENCE [GENOMIC RNA]</scope>
</reference>
<reference key="2">
    <citation type="journal article" date="1984" name="Virus Res.">
        <title>Nucleotide sequence of RNA segment 3 of the avian influenza A/FPV/Rostock/34 and its comparison with the corresponding segment of human strains A/PR/8/34 and A/NT/60/68.</title>
        <authorList>
            <person name="Robertson J.S."/>
            <person name="Elaine M."/>
            <person name="Robertson St C."/>
            <person name="Roditi I.J."/>
        </authorList>
    </citation>
    <scope>NUCLEOTIDE SEQUENCE [GENOMIC RNA]</scope>
</reference>
<feature type="chain" id="PRO_0000078783" description="Polymerase acidic protein">
    <location>
        <begin position="1"/>
        <end position="716"/>
    </location>
</feature>
<feature type="short sequence motif" description="Nuclear localization signal 1 (NLS1)" evidence="1 2">
    <location>
        <begin position="124"/>
        <end position="139"/>
    </location>
</feature>
<feature type="short sequence motif" description="Nuclear localization signal 2 (NLS2)" evidence="1 2">
    <location>
        <begin position="184"/>
        <end position="247"/>
    </location>
</feature>
<feature type="binding site" evidence="2">
    <location>
        <position position="41"/>
    </location>
    <ligand>
        <name>Mn(2+)</name>
        <dbReference type="ChEBI" id="CHEBI:29035"/>
        <label>1</label>
    </ligand>
</feature>
<feature type="binding site" evidence="2">
    <location>
        <position position="80"/>
    </location>
    <ligand>
        <name>Mn(2+)</name>
        <dbReference type="ChEBI" id="CHEBI:29035"/>
        <label>2</label>
    </ligand>
</feature>
<feature type="binding site" evidence="2">
    <location>
        <position position="108"/>
    </location>
    <ligand>
        <name>Mn(2+)</name>
        <dbReference type="ChEBI" id="CHEBI:29035"/>
        <label>1</label>
    </ligand>
</feature>
<feature type="binding site" evidence="2">
    <location>
        <position position="108"/>
    </location>
    <ligand>
        <name>Mn(2+)</name>
        <dbReference type="ChEBI" id="CHEBI:29035"/>
        <label>2</label>
    </ligand>
</feature>
<feature type="binding site" evidence="2">
    <location>
        <position position="119"/>
    </location>
    <ligand>
        <name>Mn(2+)</name>
        <dbReference type="ChEBI" id="CHEBI:29035"/>
        <label>1</label>
    </ligand>
</feature>
<feature type="binding site" evidence="2">
    <location>
        <position position="120"/>
    </location>
    <ligand>
        <name>Mn(2+)</name>
        <dbReference type="ChEBI" id="CHEBI:29035"/>
        <label>1</label>
    </ligand>
</feature>
<evidence type="ECO:0000250" key="1">
    <source>
        <dbReference type="UniProtKB" id="P03433"/>
    </source>
</evidence>
<evidence type="ECO:0000255" key="2">
    <source>
        <dbReference type="HAMAP-Rule" id="MF_04063"/>
    </source>
</evidence>
<organismHost>
    <name type="scientific">Aves</name>
    <dbReference type="NCBI Taxonomy" id="8782"/>
</organismHost>
<gene>
    <name evidence="2" type="primary">PA</name>
</gene>
<accession>P12444</accession>
<sequence>MEEFVRQCFNPMIVELAEKTMKEYGEDPKIETNKFAAICTHLEVCFMYSDFHFIDERGESKIVESGDPNALLKHRFEIIEGRDRTMAWTVVNSICNTTGVEKPKFLPDLYDYKENRFIEIGVTRREVHIYYLEKANKIKSEKTHIHIFSFTGEEMATKADYTLDEESRARIKTRLFTIRQEMASRGLWDSFRQSERGEETIEERFEITGTMRRLAEQSLPPNFSSLENFRAYVDGFKPNGCIEGKLSQMSKEVNARIEPFLKTTPRPLRLPDGPPCSQRSKFLLMDALKLSIEDPSHEGEGIPLHDAIKCMKTFFGWKEPNIVKPHEKGINPNYLLAWNQVLAELKDIENEEKIPKTKNMKKTSQLKWALGENMAPEKVDFEDCKDISDLKQYDSDEPEQRSLASWIQSEFNKACELTDSGWIELDEIGEDVAPIEHIASMRRNYFTAEVSHCRATEYIMKGVYINTALLNASCAAMDDFQLIPMISKCRTKEGRRKTNLYGFIIKGRSHLRNDTDVVNFVSMEFSLTDPRLEPHKWEKYCVLEIGDMLLRTAIGQVSRPMFLYVRTNGTSKIKMKWGMEMRRCLLQSLQQVESMVEAESSVKEKDMTKEFFENKSKTWPIGESPKGVEEGSIGKVCRTLLAKSVFNSLYASPQLEGFSAESRKLLLIVQALRDNLEPGTFDLGGLYGAIEECLINDPWVLLNASWFNSFLTHALK</sequence>
<keyword id="KW-1157">Cap snatching</keyword>
<keyword id="KW-0255">Endonuclease</keyword>
<keyword id="KW-1262">Eukaryotic host gene expression shutoff by virus</keyword>
<keyword id="KW-1191">Eukaryotic host transcription shutoff by virus</keyword>
<keyword id="KW-1035">Host cytoplasm</keyword>
<keyword id="KW-1190">Host gene expression shutoff by virus</keyword>
<keyword id="KW-1048">Host nucleus</keyword>
<keyword id="KW-0945">Host-virus interaction</keyword>
<keyword id="KW-0378">Hydrolase</keyword>
<keyword id="KW-1104">Inhibition of host RNA polymerase II by virus</keyword>
<keyword id="KW-0464">Manganese</keyword>
<keyword id="KW-0479">Metal-binding</keyword>
<keyword id="KW-0540">Nuclease</keyword>
<keyword id="KW-0597">Phosphoprotein</keyword>
<keyword id="KW-0688">Ribosomal frameshifting</keyword>
<name>PA_I34A0</name>
<protein>
    <recommendedName>
        <fullName evidence="2">Polymerase acidic protein</fullName>
        <ecNumber evidence="2">3.1.-.-</ecNumber>
    </recommendedName>
    <alternativeName>
        <fullName evidence="2">RNA-directed RNA polymerase subunit P2</fullName>
    </alternativeName>
</protein>
<organism>
    <name type="scientific">Influenza A virus (strain A/Fowl plague virus/Rostock/8/1934 H7N1)</name>
    <dbReference type="NCBI Taxonomy" id="392810"/>
    <lineage>
        <taxon>Viruses</taxon>
        <taxon>Riboviria</taxon>
        <taxon>Orthornavirae</taxon>
        <taxon>Negarnaviricota</taxon>
        <taxon>Polyploviricotina</taxon>
        <taxon>Insthoviricetes</taxon>
        <taxon>Articulavirales</taxon>
        <taxon>Orthomyxoviridae</taxon>
        <taxon>Alphainfluenzavirus</taxon>
        <taxon>Alphainfluenzavirus influenzae</taxon>
        <taxon>Influenza A virus</taxon>
    </lineage>
</organism>
<dbReference type="EC" id="3.1.-.-" evidence="2"/>
<dbReference type="EMBL" id="X17223">
    <property type="protein sequence ID" value="CAA35096.1"/>
    <property type="molecule type" value="Genomic_RNA"/>
</dbReference>
<dbReference type="EMBL" id="M21850">
    <property type="protein sequence ID" value="AAA43619.1"/>
    <property type="molecule type" value="Genomic_RNA"/>
</dbReference>
<dbReference type="PIR" id="S07418">
    <property type="entry name" value="S07418"/>
</dbReference>
<dbReference type="SMR" id="P12444"/>
<dbReference type="MEROPS" id="S62.001"/>
<dbReference type="GO" id="GO:0030430">
    <property type="term" value="C:host cell cytoplasm"/>
    <property type="evidence" value="ECO:0007669"/>
    <property type="project" value="UniProtKB-SubCell"/>
</dbReference>
<dbReference type="GO" id="GO:0042025">
    <property type="term" value="C:host cell nucleus"/>
    <property type="evidence" value="ECO:0007669"/>
    <property type="project" value="UniProtKB-SubCell"/>
</dbReference>
<dbReference type="GO" id="GO:0004519">
    <property type="term" value="F:endonuclease activity"/>
    <property type="evidence" value="ECO:0007669"/>
    <property type="project" value="UniProtKB-KW"/>
</dbReference>
<dbReference type="GO" id="GO:0046872">
    <property type="term" value="F:metal ion binding"/>
    <property type="evidence" value="ECO:0007669"/>
    <property type="project" value="UniProtKB-KW"/>
</dbReference>
<dbReference type="GO" id="GO:0003723">
    <property type="term" value="F:RNA binding"/>
    <property type="evidence" value="ECO:0007669"/>
    <property type="project" value="UniProtKB-UniRule"/>
</dbReference>
<dbReference type="GO" id="GO:0075526">
    <property type="term" value="P:cap snatching"/>
    <property type="evidence" value="ECO:0007669"/>
    <property type="project" value="UniProtKB-UniRule"/>
</dbReference>
<dbReference type="GO" id="GO:0006351">
    <property type="term" value="P:DNA-templated transcription"/>
    <property type="evidence" value="ECO:0007669"/>
    <property type="project" value="UniProtKB-UniRule"/>
</dbReference>
<dbReference type="GO" id="GO:0039657">
    <property type="term" value="P:symbiont-mediated suppression of host gene expression"/>
    <property type="evidence" value="ECO:0007669"/>
    <property type="project" value="UniProtKB-KW"/>
</dbReference>
<dbReference type="GO" id="GO:0039523">
    <property type="term" value="P:symbiont-mediated suppression of host mRNA transcription via inhibition of RNA polymerase II activity"/>
    <property type="evidence" value="ECO:0007669"/>
    <property type="project" value="UniProtKB-UniRule"/>
</dbReference>
<dbReference type="GO" id="GO:0039694">
    <property type="term" value="P:viral RNA genome replication"/>
    <property type="evidence" value="ECO:0007669"/>
    <property type="project" value="InterPro"/>
</dbReference>
<dbReference type="GO" id="GO:0075523">
    <property type="term" value="P:viral translational frameshifting"/>
    <property type="evidence" value="ECO:0007669"/>
    <property type="project" value="UniProtKB-KW"/>
</dbReference>
<dbReference type="FunFam" id="3.40.91.90:FF:000001">
    <property type="entry name" value="Polymerase acidic protein"/>
    <property type="match status" value="1"/>
</dbReference>
<dbReference type="Gene3D" id="3.40.91.90">
    <property type="entry name" value="Influenza RNA-dependent RNA polymerase subunit PA, endonuclease domain"/>
    <property type="match status" value="1"/>
</dbReference>
<dbReference type="HAMAP" id="MF_04063">
    <property type="entry name" value="INFV_PA"/>
    <property type="match status" value="1"/>
</dbReference>
<dbReference type="InterPro" id="IPR037534">
    <property type="entry name" value="INFV_PA"/>
</dbReference>
<dbReference type="InterPro" id="IPR001009">
    <property type="entry name" value="PA/PA-X"/>
</dbReference>
<dbReference type="InterPro" id="IPR038372">
    <property type="entry name" value="PA/PA-X_sf"/>
</dbReference>
<dbReference type="Pfam" id="PF00603">
    <property type="entry name" value="Flu_PA"/>
    <property type="match status" value="1"/>
</dbReference>
<proteinExistence type="inferred from homology"/>